<reference key="1">
    <citation type="journal article" date="2005" name="Science">
        <title>Extensive DNA inversions in the B. fragilis genome control variable gene expression.</title>
        <authorList>
            <person name="Cerdeno-Tarraga A.-M."/>
            <person name="Patrick S."/>
            <person name="Crossman L.C."/>
            <person name="Blakely G."/>
            <person name="Abratt V."/>
            <person name="Lennard N."/>
            <person name="Poxton I."/>
            <person name="Duerden B."/>
            <person name="Harris B."/>
            <person name="Quail M.A."/>
            <person name="Barron A."/>
            <person name="Clark L."/>
            <person name="Corton C."/>
            <person name="Doggett J."/>
            <person name="Holden M.T.G."/>
            <person name="Larke N."/>
            <person name="Line A."/>
            <person name="Lord A."/>
            <person name="Norbertczak H."/>
            <person name="Ormond D."/>
            <person name="Price C."/>
            <person name="Rabbinowitsch E."/>
            <person name="Woodward J."/>
            <person name="Barrell B.G."/>
            <person name="Parkhill J."/>
        </authorList>
    </citation>
    <scope>NUCLEOTIDE SEQUENCE [LARGE SCALE GENOMIC DNA]</scope>
    <source>
        <strain>ATCC 25285 / DSM 2151 / CCUG 4856 / JCM 11019 / LMG 10263 / NCTC 9343 / Onslow / VPI 2553 / EN-2</strain>
    </source>
</reference>
<name>MIAA2_BACFN</name>
<feature type="chain" id="PRO_0000377079" description="tRNA dimethylallyltransferase 2">
    <location>
        <begin position="1"/>
        <end position="306"/>
    </location>
</feature>
<feature type="region of interest" description="Interaction with substrate tRNA" evidence="1">
    <location>
        <begin position="36"/>
        <end position="39"/>
    </location>
</feature>
<feature type="binding site" evidence="1">
    <location>
        <begin position="11"/>
        <end position="18"/>
    </location>
    <ligand>
        <name>ATP</name>
        <dbReference type="ChEBI" id="CHEBI:30616"/>
    </ligand>
</feature>
<feature type="binding site" evidence="1">
    <location>
        <begin position="13"/>
        <end position="18"/>
    </location>
    <ligand>
        <name>substrate</name>
    </ligand>
</feature>
<feature type="site" description="Interaction with substrate tRNA" evidence="1">
    <location>
        <position position="105"/>
    </location>
</feature>
<sequence length="306" mass="35378">MPDYDLIAILGPTASGKTPFAAALAAELNTEIISADSRQIYRGMDLGTGKDLEDYTINGRQIPYHLIDIADPGYKYNVFEYQRDFLTAYETIKQKGCLPVLCGGTGLYLESVLKGYRLIPVPENQELRVRLAEKSLEELTAILSSYKTLHNSTDVDTVKRAIRAIEIEEYYAKTPIEEREFPQLNSLIIGVDIDRELRREKITRRLKQRLDDGMVEEVRRLLAEGIQPDDLIYYGLEYKYLTLYAIGKMTYDEMFTGLETAIHQFAKRQMTWFRGMERRGFTIHWVDASLPMEEKINFVKQKLKEF</sequence>
<comment type="function">
    <text evidence="1">Catalyzes the transfer of a dimethylallyl group onto the adenine at position 37 in tRNAs that read codons beginning with uridine, leading to the formation of N6-(dimethylallyl)adenosine (i(6)A).</text>
</comment>
<comment type="catalytic activity">
    <reaction evidence="1">
        <text>adenosine(37) in tRNA + dimethylallyl diphosphate = N(6)-dimethylallyladenosine(37) in tRNA + diphosphate</text>
        <dbReference type="Rhea" id="RHEA:26482"/>
        <dbReference type="Rhea" id="RHEA-COMP:10162"/>
        <dbReference type="Rhea" id="RHEA-COMP:10375"/>
        <dbReference type="ChEBI" id="CHEBI:33019"/>
        <dbReference type="ChEBI" id="CHEBI:57623"/>
        <dbReference type="ChEBI" id="CHEBI:74411"/>
        <dbReference type="ChEBI" id="CHEBI:74415"/>
        <dbReference type="EC" id="2.5.1.75"/>
    </reaction>
</comment>
<comment type="cofactor">
    <cofactor evidence="1">
        <name>Mg(2+)</name>
        <dbReference type="ChEBI" id="CHEBI:18420"/>
    </cofactor>
</comment>
<comment type="subunit">
    <text evidence="1">Monomer.</text>
</comment>
<comment type="similarity">
    <text evidence="1">Belongs to the IPP transferase family.</text>
</comment>
<gene>
    <name evidence="1" type="primary">miaA2</name>
    <name type="ordered locus">BF0938</name>
</gene>
<proteinExistence type="inferred from homology"/>
<dbReference type="EC" id="2.5.1.75" evidence="1"/>
<dbReference type="EMBL" id="CR626927">
    <property type="protein sequence ID" value="CAH06680.1"/>
    <property type="molecule type" value="Genomic_DNA"/>
</dbReference>
<dbReference type="SMR" id="Q5LGQ7"/>
<dbReference type="PaxDb" id="272559-BF9343_0899"/>
<dbReference type="KEGG" id="bfs:BF9343_0899"/>
<dbReference type="eggNOG" id="COG0324">
    <property type="taxonomic scope" value="Bacteria"/>
</dbReference>
<dbReference type="HOGENOM" id="CLU_032616_0_1_10"/>
<dbReference type="BioCyc" id="BFRA272559:G1GHZ-990-MONOMER"/>
<dbReference type="Proteomes" id="UP000006731">
    <property type="component" value="Chromosome"/>
</dbReference>
<dbReference type="GO" id="GO:0005524">
    <property type="term" value="F:ATP binding"/>
    <property type="evidence" value="ECO:0007669"/>
    <property type="project" value="UniProtKB-UniRule"/>
</dbReference>
<dbReference type="GO" id="GO:0052381">
    <property type="term" value="F:tRNA dimethylallyltransferase activity"/>
    <property type="evidence" value="ECO:0007669"/>
    <property type="project" value="UniProtKB-UniRule"/>
</dbReference>
<dbReference type="GO" id="GO:0006400">
    <property type="term" value="P:tRNA modification"/>
    <property type="evidence" value="ECO:0007669"/>
    <property type="project" value="TreeGrafter"/>
</dbReference>
<dbReference type="Gene3D" id="3.40.50.300">
    <property type="entry name" value="P-loop containing nucleotide triphosphate hydrolases"/>
    <property type="match status" value="2"/>
</dbReference>
<dbReference type="HAMAP" id="MF_00185">
    <property type="entry name" value="IPP_trans"/>
    <property type="match status" value="1"/>
</dbReference>
<dbReference type="InterPro" id="IPR039657">
    <property type="entry name" value="Dimethylallyltransferase"/>
</dbReference>
<dbReference type="InterPro" id="IPR018022">
    <property type="entry name" value="IPT"/>
</dbReference>
<dbReference type="InterPro" id="IPR027417">
    <property type="entry name" value="P-loop_NTPase"/>
</dbReference>
<dbReference type="NCBIfam" id="TIGR00174">
    <property type="entry name" value="miaA"/>
    <property type="match status" value="1"/>
</dbReference>
<dbReference type="PANTHER" id="PTHR11088">
    <property type="entry name" value="TRNA DIMETHYLALLYLTRANSFERASE"/>
    <property type="match status" value="1"/>
</dbReference>
<dbReference type="PANTHER" id="PTHR11088:SF60">
    <property type="entry name" value="TRNA DIMETHYLALLYLTRANSFERASE"/>
    <property type="match status" value="1"/>
</dbReference>
<dbReference type="Pfam" id="PF01715">
    <property type="entry name" value="IPPT"/>
    <property type="match status" value="1"/>
</dbReference>
<dbReference type="SUPFAM" id="SSF52540">
    <property type="entry name" value="P-loop containing nucleoside triphosphate hydrolases"/>
    <property type="match status" value="2"/>
</dbReference>
<evidence type="ECO:0000255" key="1">
    <source>
        <dbReference type="HAMAP-Rule" id="MF_00185"/>
    </source>
</evidence>
<organism>
    <name type="scientific">Bacteroides fragilis (strain ATCC 25285 / DSM 2151 / CCUG 4856 / JCM 11019 / LMG 10263 / NCTC 9343 / Onslow / VPI 2553 / EN-2)</name>
    <dbReference type="NCBI Taxonomy" id="272559"/>
    <lineage>
        <taxon>Bacteria</taxon>
        <taxon>Pseudomonadati</taxon>
        <taxon>Bacteroidota</taxon>
        <taxon>Bacteroidia</taxon>
        <taxon>Bacteroidales</taxon>
        <taxon>Bacteroidaceae</taxon>
        <taxon>Bacteroides</taxon>
    </lineage>
</organism>
<protein>
    <recommendedName>
        <fullName evidence="1">tRNA dimethylallyltransferase 2</fullName>
        <ecNumber evidence="1">2.5.1.75</ecNumber>
    </recommendedName>
    <alternativeName>
        <fullName evidence="1">Dimethylallyl diphosphate:tRNA dimethylallyltransferase 2</fullName>
        <shortName evidence="1">DMAPP:tRNA dimethylallyltransferase 2</shortName>
        <shortName evidence="1">DMATase 2</shortName>
    </alternativeName>
    <alternativeName>
        <fullName evidence="1">Isopentenyl-diphosphate:tRNA isopentenyltransferase 2</fullName>
        <shortName evidence="1">IPP transferase 2</shortName>
        <shortName evidence="1">IPPT 2</shortName>
        <shortName evidence="1">IPTase 2</shortName>
    </alternativeName>
</protein>
<accession>Q5LGQ7</accession>
<keyword id="KW-0067">ATP-binding</keyword>
<keyword id="KW-0460">Magnesium</keyword>
<keyword id="KW-0547">Nucleotide-binding</keyword>
<keyword id="KW-0808">Transferase</keyword>
<keyword id="KW-0819">tRNA processing</keyword>